<keyword id="KW-0963">Cytoplasm</keyword>
<keyword id="KW-0256">Endoplasmic reticulum</keyword>
<keyword id="KW-0378">Hydrolase</keyword>
<keyword id="KW-0443">Lipid metabolism</keyword>
<keyword id="KW-0472">Membrane</keyword>
<keyword id="KW-0479">Metal-binding</keyword>
<keyword id="KW-1185">Reference proteome</keyword>
<keyword id="KW-0812">Transmembrane</keyword>
<keyword id="KW-1133">Transmembrane helix</keyword>
<comment type="function">
    <text evidence="2">Hydrolyzes lysoglycerophospholipids to produce lysophosphatidic acid (LPA) and the corresponding amines. Shows a preference for 1-O-alkyl-sn-glycero-3-phosphocholine (lyso-PAF), lysophosphatidylethanolamine (lyso-PE) and lysophosphatidylcholine (lyso-PC). May be involved in bioactive N-acylethanolamine biosynthesis from both N-acyl-lysoplasmenylethanolamin (N-acyl-lysoPlsEt) and N-acyl-lysophosphatidylethanolamin (N-acyl-lysoPE). In addition, hydrolyzes glycerophospho-N-acylethanolamine to N-acylethanolamine. Does not display glycerophosphodiester phosphodiesterase activity, since it cannot hydrolyze either glycerophosphoinositol or glycerophosphocholine.</text>
</comment>
<comment type="catalytic activity">
    <reaction evidence="2">
        <text>a 1-O-alkyl-sn-glycero-3-phosphocholine + H2O = a 1-O-alkyl-sn-glycero-3-phosphate + choline + H(+)</text>
        <dbReference type="Rhea" id="RHEA:39927"/>
        <dbReference type="ChEBI" id="CHEBI:15354"/>
        <dbReference type="ChEBI" id="CHEBI:15377"/>
        <dbReference type="ChEBI" id="CHEBI:15378"/>
        <dbReference type="ChEBI" id="CHEBI:30909"/>
        <dbReference type="ChEBI" id="CHEBI:58014"/>
    </reaction>
    <physiologicalReaction direction="left-to-right" evidence="2">
        <dbReference type="Rhea" id="RHEA:39928"/>
    </physiologicalReaction>
</comment>
<comment type="catalytic activity">
    <reaction evidence="2">
        <text>1-hexadecanoyl-sn-glycero-3-phosphocholine + H2O = 1-hexadecanoyl-sn-glycero-3-phosphate + choline + H(+)</text>
        <dbReference type="Rhea" id="RHEA:38975"/>
        <dbReference type="ChEBI" id="CHEBI:15354"/>
        <dbReference type="ChEBI" id="CHEBI:15377"/>
        <dbReference type="ChEBI" id="CHEBI:15378"/>
        <dbReference type="ChEBI" id="CHEBI:57518"/>
        <dbReference type="ChEBI" id="CHEBI:72998"/>
    </reaction>
    <physiologicalReaction direction="left-to-right" evidence="2">
        <dbReference type="Rhea" id="RHEA:38976"/>
    </physiologicalReaction>
</comment>
<comment type="catalytic activity">
    <reaction evidence="2">
        <text>1-hexadecanoyl-sn-glycero-3-phosphoethanolamine + H2O = 1-hexadecanoyl-sn-glycero-3-phosphate + ethanolamine + H(+)</text>
        <dbReference type="Rhea" id="RHEA:53172"/>
        <dbReference type="ChEBI" id="CHEBI:15377"/>
        <dbReference type="ChEBI" id="CHEBI:15378"/>
        <dbReference type="ChEBI" id="CHEBI:57518"/>
        <dbReference type="ChEBI" id="CHEBI:57603"/>
        <dbReference type="ChEBI" id="CHEBI:73004"/>
    </reaction>
    <physiologicalReaction direction="left-to-right" evidence="2">
        <dbReference type="Rhea" id="RHEA:53173"/>
    </physiologicalReaction>
</comment>
<comment type="catalytic activity">
    <reaction evidence="2">
        <text>N-hexadecanoyl-sn-glycero-3-phosphoethanolamine + H2O = N-hexadecanoylethanolamine + sn-glycerol 3-phosphate + H(+)</text>
        <dbReference type="Rhea" id="RHEA:45436"/>
        <dbReference type="ChEBI" id="CHEBI:15377"/>
        <dbReference type="ChEBI" id="CHEBI:15378"/>
        <dbReference type="ChEBI" id="CHEBI:57597"/>
        <dbReference type="ChEBI" id="CHEBI:71464"/>
        <dbReference type="ChEBI" id="CHEBI:85226"/>
    </reaction>
    <physiologicalReaction direction="left-to-right" evidence="2">
        <dbReference type="Rhea" id="RHEA:45437"/>
    </physiologicalReaction>
</comment>
<comment type="catalytic activity">
    <reaction evidence="2">
        <text>N-(5Z,8Z,11Z,14Z-eicosatetraenoyl)-1-(9Z-octadecenoyl)-sn-glycero-3-phosphoethanolamine + H2O = N-(5Z,8Z,11Z,14Z-eicosatetraenoyl)-ethanolamine + 1-(9Z-octadecenoyl)-sn-glycero-3-phosphate + H(+)</text>
        <dbReference type="Rhea" id="RHEA:45544"/>
        <dbReference type="ChEBI" id="CHEBI:2700"/>
        <dbReference type="ChEBI" id="CHEBI:15377"/>
        <dbReference type="ChEBI" id="CHEBI:15378"/>
        <dbReference type="ChEBI" id="CHEBI:74544"/>
        <dbReference type="ChEBI" id="CHEBI:85223"/>
    </reaction>
    <physiologicalReaction direction="left-to-right" evidence="2">
        <dbReference type="Rhea" id="RHEA:45545"/>
    </physiologicalReaction>
</comment>
<comment type="catalytic activity">
    <reaction evidence="2">
        <text>N,1-di-(9Z-octadecenoyl)-sn-glycero-3-phosphoethanolamine + H2O = N-(9Z-octadecenoyl) ethanolamine + 1-(9Z-octadecenoyl)-sn-glycero-3-phosphate + H(+)</text>
        <dbReference type="Rhea" id="RHEA:56460"/>
        <dbReference type="ChEBI" id="CHEBI:15377"/>
        <dbReference type="ChEBI" id="CHEBI:15378"/>
        <dbReference type="ChEBI" id="CHEBI:71466"/>
        <dbReference type="ChEBI" id="CHEBI:74544"/>
        <dbReference type="ChEBI" id="CHEBI:85222"/>
    </reaction>
    <physiologicalReaction direction="left-to-right" evidence="2">
        <dbReference type="Rhea" id="RHEA:56461"/>
    </physiologicalReaction>
</comment>
<comment type="catalytic activity">
    <reaction evidence="2">
        <text>N-hexadecanoyl-1-(9Z-octadecenoyl)-sn-glycero-3-phosphoethanolamine + H2O = N-hexadecanoylethanolamine + 1-(9Z-octadecenoyl)-sn-glycero-3-phosphate + H(+)</text>
        <dbReference type="Rhea" id="RHEA:53168"/>
        <dbReference type="ChEBI" id="CHEBI:15377"/>
        <dbReference type="ChEBI" id="CHEBI:15378"/>
        <dbReference type="ChEBI" id="CHEBI:71464"/>
        <dbReference type="ChEBI" id="CHEBI:74544"/>
        <dbReference type="ChEBI" id="CHEBI:85217"/>
    </reaction>
    <physiologicalReaction direction="left-to-right" evidence="2">
        <dbReference type="Rhea" id="RHEA:53169"/>
    </physiologicalReaction>
</comment>
<comment type="catalytic activity">
    <reaction evidence="2">
        <text>1-O-hexadecyl-sn-glycero-3-phosphocholine + H2O = 1-O-hexadecyl-sn-glycero-3-phosphate + choline + H(+)</text>
        <dbReference type="Rhea" id="RHEA:41143"/>
        <dbReference type="ChEBI" id="CHEBI:15354"/>
        <dbReference type="ChEBI" id="CHEBI:15377"/>
        <dbReference type="ChEBI" id="CHEBI:15378"/>
        <dbReference type="ChEBI" id="CHEBI:64496"/>
        <dbReference type="ChEBI" id="CHEBI:77580"/>
    </reaction>
    <physiologicalReaction direction="left-to-right" evidence="2">
        <dbReference type="Rhea" id="RHEA:41144"/>
    </physiologicalReaction>
</comment>
<comment type="catalytic activity">
    <reaction evidence="2">
        <text>1-(9Z-octadecenoyl)-sn-glycero-3-phosphocholine + H2O = 1-(9Z-octadecenoyl)-sn-glycero-3-phosphate + choline + H(+)</text>
        <dbReference type="Rhea" id="RHEA:38915"/>
        <dbReference type="ChEBI" id="CHEBI:15354"/>
        <dbReference type="ChEBI" id="CHEBI:15377"/>
        <dbReference type="ChEBI" id="CHEBI:15378"/>
        <dbReference type="ChEBI" id="CHEBI:28610"/>
        <dbReference type="ChEBI" id="CHEBI:74544"/>
    </reaction>
    <physiologicalReaction direction="left-to-right" evidence="2">
        <dbReference type="Rhea" id="RHEA:38916"/>
    </physiologicalReaction>
</comment>
<comment type="catalytic activity">
    <reaction evidence="2">
        <text>N,1-dihexadecanoyl-sn-glycero-3-phosphoethanolamine + H2O = N-hexadecanoylethanolamine + 1-hexadecanoyl-sn-glycero-3-phosphate + H(+)</text>
        <dbReference type="Rhea" id="RHEA:45592"/>
        <dbReference type="ChEBI" id="CHEBI:15377"/>
        <dbReference type="ChEBI" id="CHEBI:15378"/>
        <dbReference type="ChEBI" id="CHEBI:57518"/>
        <dbReference type="ChEBI" id="CHEBI:71464"/>
        <dbReference type="ChEBI" id="CHEBI:85335"/>
    </reaction>
    <physiologicalReaction direction="left-to-right" evidence="2">
        <dbReference type="Rhea" id="RHEA:45593"/>
    </physiologicalReaction>
</comment>
<comment type="catalytic activity">
    <reaction evidence="2">
        <text>1-O-(1Z-octadecenyl)-sn-glycero-3-phospho-(N-5Z,8Z,11Z,14Z-eicosatetraenoyl)-ethanolamine + H2O = 1-O-(1Z-octadecenyl)-sn-glycero-3-phosphate + N-(5Z,8Z,11Z,14Z-eicosatetraenoyl)-ethanolamine + H(+)</text>
        <dbReference type="Rhea" id="RHEA:53192"/>
        <dbReference type="ChEBI" id="CHEBI:2700"/>
        <dbReference type="ChEBI" id="CHEBI:15377"/>
        <dbReference type="ChEBI" id="CHEBI:15378"/>
        <dbReference type="ChEBI" id="CHEBI:137016"/>
        <dbReference type="ChEBI" id="CHEBI:137017"/>
    </reaction>
    <physiologicalReaction direction="left-to-right" evidence="2">
        <dbReference type="Rhea" id="RHEA:53193"/>
    </physiologicalReaction>
</comment>
<comment type="catalytic activity">
    <reaction evidence="2">
        <text>1-O-(1Z-octadecenyl)-sn-glycero-3-phospho-(N-9Z-octadecenoyl)-ethanolamine + H2O = 1-O-(1Z-octadecenyl)-sn-glycero-3-phosphate + N-(9Z-octadecenoyl) ethanolamine + H(+)</text>
        <dbReference type="Rhea" id="RHEA:53188"/>
        <dbReference type="ChEBI" id="CHEBI:15377"/>
        <dbReference type="ChEBI" id="CHEBI:15378"/>
        <dbReference type="ChEBI" id="CHEBI:71466"/>
        <dbReference type="ChEBI" id="CHEBI:137010"/>
        <dbReference type="ChEBI" id="CHEBI:137017"/>
    </reaction>
    <physiologicalReaction direction="left-to-right" evidence="2">
        <dbReference type="Rhea" id="RHEA:53189"/>
    </physiologicalReaction>
</comment>
<comment type="catalytic activity">
    <reaction evidence="2">
        <text>1-O-(1Z-octadecenyl)-sn-glycero-3-phospho-N-hexadecanoyl-ethanolamine + H2O = 1-O-(1Z-octadecenyl)-sn-glycero-3-phosphate + N-hexadecanoylethanolamine + H(+)</text>
        <dbReference type="Rhea" id="RHEA:53184"/>
        <dbReference type="ChEBI" id="CHEBI:15377"/>
        <dbReference type="ChEBI" id="CHEBI:15378"/>
        <dbReference type="ChEBI" id="CHEBI:71464"/>
        <dbReference type="ChEBI" id="CHEBI:137009"/>
        <dbReference type="ChEBI" id="CHEBI:137017"/>
    </reaction>
    <physiologicalReaction direction="left-to-right" evidence="2">
        <dbReference type="Rhea" id="RHEA:53185"/>
    </physiologicalReaction>
</comment>
<comment type="activity regulation">
    <text evidence="1 2">Lysophospholipase D activity is increased by magnesium and manganese and inhibited by calcium in a concentration dependent manner (By similarity). Loss of lysophospholipase D activity by addition of EDTA (By similarity).</text>
</comment>
<comment type="subcellular location">
    <subcellularLocation>
        <location evidence="1">Cytoplasm</location>
    </subcellularLocation>
    <subcellularLocation>
        <location evidence="1">Membrane</location>
        <topology evidence="3">Multi-pass membrane protein</topology>
    </subcellularLocation>
    <subcellularLocation>
        <location evidence="1">Cytoplasm</location>
        <location evidence="1">Perinuclear region</location>
    </subcellularLocation>
    <subcellularLocation>
        <location evidence="1">Endoplasmic reticulum</location>
    </subcellularLocation>
    <text evidence="1">Concentrated at the perinuclear region and the cell periphery.</text>
</comment>
<comment type="similarity">
    <text evidence="4">Belongs to the glycerophosphoryl diester phosphodiesterase family.</text>
</comment>
<organism>
    <name type="scientific">Rattus norvegicus</name>
    <name type="common">Rat</name>
    <dbReference type="NCBI Taxonomy" id="10116"/>
    <lineage>
        <taxon>Eukaryota</taxon>
        <taxon>Metazoa</taxon>
        <taxon>Chordata</taxon>
        <taxon>Craniata</taxon>
        <taxon>Vertebrata</taxon>
        <taxon>Euteleostomi</taxon>
        <taxon>Mammalia</taxon>
        <taxon>Eutheria</taxon>
        <taxon>Euarchontoglires</taxon>
        <taxon>Glires</taxon>
        <taxon>Rodentia</taxon>
        <taxon>Myomorpha</taxon>
        <taxon>Muroidea</taxon>
        <taxon>Muridae</taxon>
        <taxon>Murinae</taxon>
        <taxon>Rattus</taxon>
    </lineage>
</organism>
<reference key="1">
    <citation type="journal article" date="2004" name="Genome Res.">
        <title>The status, quality, and expansion of the NIH full-length cDNA project: the Mammalian Gene Collection (MGC).</title>
        <authorList>
            <consortium name="The MGC Project Team"/>
        </authorList>
    </citation>
    <scope>NUCLEOTIDE SEQUENCE [LARGE SCALE MRNA]</scope>
    <source>
        <tissue>Testis</tissue>
    </source>
</reference>
<dbReference type="EC" id="3.1.4.-" evidence="2"/>
<dbReference type="EMBL" id="BC105620">
    <property type="protein sequence ID" value="AAI05621.1"/>
    <property type="molecule type" value="mRNA"/>
</dbReference>
<dbReference type="RefSeq" id="NP_001037703.1">
    <property type="nucleotide sequence ID" value="NM_001044238.2"/>
</dbReference>
<dbReference type="SMR" id="Q0VGK4"/>
<dbReference type="FunCoup" id="Q0VGK4">
    <property type="interactions" value="1129"/>
</dbReference>
<dbReference type="STRING" id="10116.ENSRNOP00000074578"/>
<dbReference type="GlyGen" id="Q0VGK4">
    <property type="glycosylation" value="1 site"/>
</dbReference>
<dbReference type="iPTMnet" id="Q0VGK4"/>
<dbReference type="PhosphoSitePlus" id="Q0VGK4"/>
<dbReference type="jPOST" id="Q0VGK4"/>
<dbReference type="PaxDb" id="10116-ENSRNOP00000048572"/>
<dbReference type="Ensembl" id="ENSRNOT00000079311.2">
    <property type="protein sequence ID" value="ENSRNOP00000074578.2"/>
    <property type="gene ID" value="ENSRNOG00000060561.2"/>
</dbReference>
<dbReference type="GeneID" id="303407"/>
<dbReference type="KEGG" id="rno:303407"/>
<dbReference type="AGR" id="RGD:1311813"/>
<dbReference type="CTD" id="284161"/>
<dbReference type="RGD" id="1311813">
    <property type="gene designation" value="Gdpd1"/>
</dbReference>
<dbReference type="eggNOG" id="KOG2258">
    <property type="taxonomic scope" value="Eukaryota"/>
</dbReference>
<dbReference type="GeneTree" id="ENSGT00940000156673"/>
<dbReference type="InParanoid" id="Q0VGK4"/>
<dbReference type="PhylomeDB" id="Q0VGK4"/>
<dbReference type="TreeFam" id="TF328545"/>
<dbReference type="PRO" id="PR:Q0VGK4"/>
<dbReference type="Proteomes" id="UP000002494">
    <property type="component" value="Chromosome 10"/>
</dbReference>
<dbReference type="GO" id="GO:0005783">
    <property type="term" value="C:endoplasmic reticulum"/>
    <property type="evidence" value="ECO:0000250"/>
    <property type="project" value="UniProtKB"/>
</dbReference>
<dbReference type="GO" id="GO:0005789">
    <property type="term" value="C:endoplasmic reticulum membrane"/>
    <property type="evidence" value="ECO:0000318"/>
    <property type="project" value="GO_Central"/>
</dbReference>
<dbReference type="GO" id="GO:0016020">
    <property type="term" value="C:membrane"/>
    <property type="evidence" value="ECO:0000266"/>
    <property type="project" value="RGD"/>
</dbReference>
<dbReference type="GO" id="GO:0048471">
    <property type="term" value="C:perinuclear region of cytoplasm"/>
    <property type="evidence" value="ECO:0000250"/>
    <property type="project" value="UniProtKB"/>
</dbReference>
<dbReference type="GO" id="GO:0004622">
    <property type="term" value="F:lysophospholipase activity"/>
    <property type="evidence" value="ECO:0000266"/>
    <property type="project" value="RGD"/>
</dbReference>
<dbReference type="GO" id="GO:0046872">
    <property type="term" value="F:metal ion binding"/>
    <property type="evidence" value="ECO:0007669"/>
    <property type="project" value="UniProtKB-KW"/>
</dbReference>
<dbReference type="GO" id="GO:0008081">
    <property type="term" value="F:phosphoric diester hydrolase activity"/>
    <property type="evidence" value="ECO:0000250"/>
    <property type="project" value="UniProtKB"/>
</dbReference>
<dbReference type="GO" id="GO:0046475">
    <property type="term" value="P:glycerophospholipid catabolic process"/>
    <property type="evidence" value="ECO:0000318"/>
    <property type="project" value="GO_Central"/>
</dbReference>
<dbReference type="GO" id="GO:0070291">
    <property type="term" value="P:N-acylethanolamine metabolic process"/>
    <property type="evidence" value="ECO:0000250"/>
    <property type="project" value="UniProtKB"/>
</dbReference>
<dbReference type="GO" id="GO:0006644">
    <property type="term" value="P:phospholipid metabolic process"/>
    <property type="evidence" value="ECO:0000266"/>
    <property type="project" value="RGD"/>
</dbReference>
<dbReference type="CDD" id="cd08612">
    <property type="entry name" value="GDPD_GDE4"/>
    <property type="match status" value="1"/>
</dbReference>
<dbReference type="Gene3D" id="3.20.20.190">
    <property type="entry name" value="Phosphatidylinositol (PI) phosphodiesterase"/>
    <property type="match status" value="1"/>
</dbReference>
<dbReference type="InterPro" id="IPR052271">
    <property type="entry name" value="GDPD-Related"/>
</dbReference>
<dbReference type="InterPro" id="IPR030395">
    <property type="entry name" value="GP_PDE_dom"/>
</dbReference>
<dbReference type="InterPro" id="IPR017946">
    <property type="entry name" value="PLC-like_Pdiesterase_TIM-brl"/>
</dbReference>
<dbReference type="PANTHER" id="PTHR42758:SF1">
    <property type="entry name" value="LYSOPHOSPHOLIPASE D GDPD1"/>
    <property type="match status" value="1"/>
</dbReference>
<dbReference type="PANTHER" id="PTHR42758">
    <property type="entry name" value="PHOSPHATIDYLGLYCEROL PHOSPHOLIPASE C"/>
    <property type="match status" value="1"/>
</dbReference>
<dbReference type="Pfam" id="PF03009">
    <property type="entry name" value="GDPD"/>
    <property type="match status" value="1"/>
</dbReference>
<dbReference type="SUPFAM" id="SSF51695">
    <property type="entry name" value="PLC-like phosphodiesterases"/>
    <property type="match status" value="1"/>
</dbReference>
<dbReference type="PROSITE" id="PS51704">
    <property type="entry name" value="GP_PDE"/>
    <property type="match status" value="1"/>
</dbReference>
<gene>
    <name evidence="5" type="primary">Gdpd1</name>
</gene>
<sequence length="314" mass="35811">MSSTAAFCLLSTLGGYLVTSFLLLKYPALLHQRKKQRFLSRHISHRGGAGENLENTMAAFQHAVTIGTDMLELDCHITKDEQVVVSHDANLKRSTGVNVNVSDLKYCELPPYLCKLDVPFQRACKCEGTDTRIPLLKEVFEAFPETPINIDIKVNNNVLIQKVSELVKQYKREHLTVWGNASSEIVDKCYKENSDIPILFSLQRVLLILGLFFTGLLPFVPIREQFFEIPMPSIILKLKEPHIISKGHKFLIWLSDTLLMRKALFDHLTARGIQVYIWVLNEEHEYKRAFDLGATGVMTDYPTKLKEFLNNMSA</sequence>
<protein>
    <recommendedName>
        <fullName evidence="4">Lysophospholipase D GDPD1</fullName>
        <ecNumber evidence="2">3.1.4.-</ecNumber>
    </recommendedName>
    <alternativeName>
        <fullName evidence="1">Glycerophosphodiester phosphodiesterase 4</fullName>
    </alternativeName>
    <alternativeName>
        <fullName>Glycerophosphodiester phosphodiesterase domain-containing protein 1</fullName>
    </alternativeName>
</protein>
<proteinExistence type="evidence at transcript level"/>
<evidence type="ECO:0000250" key="1">
    <source>
        <dbReference type="UniProtKB" id="Q8N9F7"/>
    </source>
</evidence>
<evidence type="ECO:0000250" key="2">
    <source>
        <dbReference type="UniProtKB" id="Q9CRY7"/>
    </source>
</evidence>
<evidence type="ECO:0000255" key="3"/>
<evidence type="ECO:0000305" key="4"/>
<evidence type="ECO:0000312" key="5">
    <source>
        <dbReference type="RGD" id="1311813"/>
    </source>
</evidence>
<accession>Q0VGK4</accession>
<name>GDPD1_RAT</name>
<feature type="chain" id="PRO_0000251933" description="Lysophospholipase D GDPD1">
    <location>
        <begin position="1"/>
        <end position="314"/>
    </location>
</feature>
<feature type="topological domain" description="Extracellular" evidence="3">
    <location>
        <begin position="1"/>
        <end position="3"/>
    </location>
</feature>
<feature type="transmembrane region" description="Helical" evidence="3">
    <location>
        <begin position="4"/>
        <end position="24"/>
    </location>
</feature>
<feature type="topological domain" description="Cytoplasmic" evidence="3">
    <location>
        <begin position="25"/>
        <end position="195"/>
    </location>
</feature>
<feature type="transmembrane region" description="Helical" evidence="3">
    <location>
        <begin position="196"/>
        <end position="216"/>
    </location>
</feature>
<feature type="topological domain" description="Extracellular" evidence="3">
    <location>
        <begin position="217"/>
        <end position="314"/>
    </location>
</feature>
<feature type="domain" description="GP-PDE">
    <location>
        <begin position="40"/>
        <end position="309"/>
    </location>
</feature>
<feature type="binding site" evidence="3">
    <location>
        <position position="72"/>
    </location>
    <ligand>
        <name>a divalent metal cation</name>
        <dbReference type="ChEBI" id="CHEBI:60240"/>
    </ligand>
</feature>
<feature type="binding site" evidence="3">
    <location>
        <position position="74"/>
    </location>
    <ligand>
        <name>a divalent metal cation</name>
        <dbReference type="ChEBI" id="CHEBI:60240"/>
    </ligand>
</feature>
<feature type="binding site" evidence="3">
    <location>
        <position position="87"/>
    </location>
    <ligand>
        <name>a divalent metal cation</name>
        <dbReference type="ChEBI" id="CHEBI:60240"/>
    </ligand>
</feature>